<gene>
    <name evidence="1" type="primary">dadA</name>
    <name type="ordered locus">SPA1070</name>
</gene>
<comment type="function">
    <text evidence="1">Oxidative deamination of D-amino acids.</text>
</comment>
<comment type="catalytic activity">
    <reaction evidence="1">
        <text>a D-alpha-amino acid + A + H2O = a 2-oxocarboxylate + AH2 + NH4(+)</text>
        <dbReference type="Rhea" id="RHEA:18125"/>
        <dbReference type="ChEBI" id="CHEBI:13193"/>
        <dbReference type="ChEBI" id="CHEBI:15377"/>
        <dbReference type="ChEBI" id="CHEBI:17499"/>
        <dbReference type="ChEBI" id="CHEBI:28938"/>
        <dbReference type="ChEBI" id="CHEBI:35179"/>
        <dbReference type="ChEBI" id="CHEBI:59871"/>
    </reaction>
</comment>
<comment type="cofactor">
    <cofactor evidence="1">
        <name>FAD</name>
        <dbReference type="ChEBI" id="CHEBI:57692"/>
    </cofactor>
</comment>
<comment type="pathway">
    <text>Amino-acid degradation; D-alanine degradation; NH(3) and pyruvate from D-alanine: step 1/1.</text>
</comment>
<comment type="similarity">
    <text evidence="1">Belongs to the DadA oxidoreductase family.</text>
</comment>
<name>DADA_SALPA</name>
<feature type="chain" id="PRO_1000066114" description="D-amino acid dehydrogenase">
    <location>
        <begin position="1"/>
        <end position="432"/>
    </location>
</feature>
<feature type="binding site" evidence="1">
    <location>
        <begin position="3"/>
        <end position="17"/>
    </location>
    <ligand>
        <name>FAD</name>
        <dbReference type="ChEBI" id="CHEBI:57692"/>
    </ligand>
</feature>
<proteinExistence type="inferred from homology"/>
<accession>Q5PCU1</accession>
<reference key="1">
    <citation type="journal article" date="2004" name="Nat. Genet.">
        <title>Comparison of genome degradation in Paratyphi A and Typhi, human-restricted serovars of Salmonella enterica that cause typhoid.</title>
        <authorList>
            <person name="McClelland M."/>
            <person name="Sanderson K.E."/>
            <person name="Clifton S.W."/>
            <person name="Latreille P."/>
            <person name="Porwollik S."/>
            <person name="Sabo A."/>
            <person name="Meyer R."/>
            <person name="Bieri T."/>
            <person name="Ozersky P."/>
            <person name="McLellan M."/>
            <person name="Harkins C.R."/>
            <person name="Wang C."/>
            <person name="Nguyen C."/>
            <person name="Berghoff A."/>
            <person name="Elliott G."/>
            <person name="Kohlberg S."/>
            <person name="Strong C."/>
            <person name="Du F."/>
            <person name="Carter J."/>
            <person name="Kremizki C."/>
            <person name="Layman D."/>
            <person name="Leonard S."/>
            <person name="Sun H."/>
            <person name="Fulton L."/>
            <person name="Nash W."/>
            <person name="Miner T."/>
            <person name="Minx P."/>
            <person name="Delehaunty K."/>
            <person name="Fronick C."/>
            <person name="Magrini V."/>
            <person name="Nhan M."/>
            <person name="Warren W."/>
            <person name="Florea L."/>
            <person name="Spieth J."/>
            <person name="Wilson R.K."/>
        </authorList>
    </citation>
    <scope>NUCLEOTIDE SEQUENCE [LARGE SCALE GENOMIC DNA]</scope>
    <source>
        <strain>ATCC 9150 / SARB42</strain>
    </source>
</reference>
<protein>
    <recommendedName>
        <fullName evidence="1">D-amino acid dehydrogenase</fullName>
        <ecNumber evidence="1">1.4.99.-</ecNumber>
    </recommendedName>
</protein>
<organism>
    <name type="scientific">Salmonella paratyphi A (strain ATCC 9150 / SARB42)</name>
    <dbReference type="NCBI Taxonomy" id="295319"/>
    <lineage>
        <taxon>Bacteria</taxon>
        <taxon>Pseudomonadati</taxon>
        <taxon>Pseudomonadota</taxon>
        <taxon>Gammaproteobacteria</taxon>
        <taxon>Enterobacterales</taxon>
        <taxon>Enterobacteriaceae</taxon>
        <taxon>Salmonella</taxon>
    </lineage>
</organism>
<evidence type="ECO:0000255" key="1">
    <source>
        <dbReference type="HAMAP-Rule" id="MF_01202"/>
    </source>
</evidence>
<sequence>MRVVILGSGVVGVTSAWYLSQAGHDVTVIDRESGPAQETSAANAGQISPGYAAPWAAPGVPLKAIKWMFQRHAPLAVRLDGTPFQLKWMWQMLRNCDTRHYMENKGRMVRLAEYSRDCLKTLRAATGIEYEGRQGGTLQLFRTAQQYENATRDIAVLEDAGVPYQLLEASRLAEVEPALAEVAHKLTGGLRLPNDETGDCQLFTQRLARMAEQAGVTFRFNTPVEKLLYENDQIYGVKCADEIIKADAYVMAFGSYSTAMLKGIVDIPVYPLKGYSLTIPIVEPDGAPVSTILDETYKIAITRFDKRIRVGGMAEIVGFNTDLLQPRRETLEMVVRDLFPRGGHIEQATFWTGLRPMTPDGTPVVGRTRYKNLWLNTGHGTLGWTMACGSGQLLSDILSGRTPAIPYDDLSVARYRSDFTPTRPQRLHSAHN</sequence>
<dbReference type="EC" id="1.4.99.-" evidence="1"/>
<dbReference type="EMBL" id="CP000026">
    <property type="protein sequence ID" value="AAV77041.1"/>
    <property type="molecule type" value="Genomic_DNA"/>
</dbReference>
<dbReference type="RefSeq" id="WP_001266935.1">
    <property type="nucleotide sequence ID" value="NC_006511.1"/>
</dbReference>
<dbReference type="SMR" id="Q5PCU1"/>
<dbReference type="KEGG" id="spt:SPA1070"/>
<dbReference type="HOGENOM" id="CLU_007884_9_2_6"/>
<dbReference type="UniPathway" id="UPA00043">
    <property type="reaction ID" value="UER00498"/>
</dbReference>
<dbReference type="Proteomes" id="UP000008185">
    <property type="component" value="Chromosome"/>
</dbReference>
<dbReference type="GO" id="GO:0005737">
    <property type="term" value="C:cytoplasm"/>
    <property type="evidence" value="ECO:0007669"/>
    <property type="project" value="TreeGrafter"/>
</dbReference>
<dbReference type="GO" id="GO:0005886">
    <property type="term" value="C:plasma membrane"/>
    <property type="evidence" value="ECO:0007669"/>
    <property type="project" value="TreeGrafter"/>
</dbReference>
<dbReference type="GO" id="GO:0008718">
    <property type="term" value="F:D-amino-acid dehydrogenase activity"/>
    <property type="evidence" value="ECO:0007669"/>
    <property type="project" value="UniProtKB-UniRule"/>
</dbReference>
<dbReference type="GO" id="GO:0055130">
    <property type="term" value="P:D-alanine catabolic process"/>
    <property type="evidence" value="ECO:0007669"/>
    <property type="project" value="UniProtKB-UniPathway"/>
</dbReference>
<dbReference type="FunFam" id="3.50.50.60:FF:000020">
    <property type="entry name" value="D-amino acid dehydrogenase"/>
    <property type="match status" value="1"/>
</dbReference>
<dbReference type="Gene3D" id="3.30.9.10">
    <property type="entry name" value="D-Amino Acid Oxidase, subunit A, domain 2"/>
    <property type="match status" value="1"/>
</dbReference>
<dbReference type="Gene3D" id="3.50.50.60">
    <property type="entry name" value="FAD/NAD(P)-binding domain"/>
    <property type="match status" value="2"/>
</dbReference>
<dbReference type="HAMAP" id="MF_01202">
    <property type="entry name" value="DadA"/>
    <property type="match status" value="1"/>
</dbReference>
<dbReference type="InterPro" id="IPR023080">
    <property type="entry name" value="DadA"/>
</dbReference>
<dbReference type="InterPro" id="IPR006076">
    <property type="entry name" value="FAD-dep_OxRdtase"/>
</dbReference>
<dbReference type="InterPro" id="IPR036188">
    <property type="entry name" value="FAD/NAD-bd_sf"/>
</dbReference>
<dbReference type="NCBIfam" id="NF001933">
    <property type="entry name" value="PRK00711.1"/>
    <property type="match status" value="1"/>
</dbReference>
<dbReference type="PANTHER" id="PTHR13847:SF280">
    <property type="entry name" value="D-AMINO ACID DEHYDROGENASE"/>
    <property type="match status" value="1"/>
</dbReference>
<dbReference type="PANTHER" id="PTHR13847">
    <property type="entry name" value="SARCOSINE DEHYDROGENASE-RELATED"/>
    <property type="match status" value="1"/>
</dbReference>
<dbReference type="Pfam" id="PF01266">
    <property type="entry name" value="DAO"/>
    <property type="match status" value="1"/>
</dbReference>
<dbReference type="SUPFAM" id="SSF54373">
    <property type="entry name" value="FAD-linked reductases, C-terminal domain"/>
    <property type="match status" value="1"/>
</dbReference>
<dbReference type="SUPFAM" id="SSF51905">
    <property type="entry name" value="FAD/NAD(P)-binding domain"/>
    <property type="match status" value="1"/>
</dbReference>
<keyword id="KW-0274">FAD</keyword>
<keyword id="KW-0285">Flavoprotein</keyword>
<keyword id="KW-0560">Oxidoreductase</keyword>